<gene>
    <name evidence="1" type="primary">trpD</name>
    <name type="ordered locus">TM1040_1140</name>
</gene>
<evidence type="ECO:0000255" key="1">
    <source>
        <dbReference type="HAMAP-Rule" id="MF_00211"/>
    </source>
</evidence>
<keyword id="KW-0028">Amino-acid biosynthesis</keyword>
<keyword id="KW-0057">Aromatic amino acid biosynthesis</keyword>
<keyword id="KW-0328">Glycosyltransferase</keyword>
<keyword id="KW-0460">Magnesium</keyword>
<keyword id="KW-0479">Metal-binding</keyword>
<keyword id="KW-1185">Reference proteome</keyword>
<keyword id="KW-0808">Transferase</keyword>
<keyword id="KW-0822">Tryptophan biosynthesis</keyword>
<organism>
    <name type="scientific">Ruegeria sp. (strain TM1040)</name>
    <name type="common">Silicibacter sp.</name>
    <dbReference type="NCBI Taxonomy" id="292414"/>
    <lineage>
        <taxon>Bacteria</taxon>
        <taxon>Pseudomonadati</taxon>
        <taxon>Pseudomonadota</taxon>
        <taxon>Alphaproteobacteria</taxon>
        <taxon>Rhodobacterales</taxon>
        <taxon>Roseobacteraceae</taxon>
        <taxon>Ruegeria</taxon>
    </lineage>
</organism>
<comment type="function">
    <text evidence="1">Catalyzes the transfer of the phosphoribosyl group of 5-phosphorylribose-1-pyrophosphate (PRPP) to anthranilate to yield N-(5'-phosphoribosyl)-anthranilate (PRA).</text>
</comment>
<comment type="catalytic activity">
    <reaction evidence="1">
        <text>N-(5-phospho-beta-D-ribosyl)anthranilate + diphosphate = 5-phospho-alpha-D-ribose 1-diphosphate + anthranilate</text>
        <dbReference type="Rhea" id="RHEA:11768"/>
        <dbReference type="ChEBI" id="CHEBI:16567"/>
        <dbReference type="ChEBI" id="CHEBI:18277"/>
        <dbReference type="ChEBI" id="CHEBI:33019"/>
        <dbReference type="ChEBI" id="CHEBI:58017"/>
        <dbReference type="EC" id="2.4.2.18"/>
    </reaction>
</comment>
<comment type="cofactor">
    <cofactor evidence="1">
        <name>Mg(2+)</name>
        <dbReference type="ChEBI" id="CHEBI:18420"/>
    </cofactor>
    <text evidence="1">Binds 2 magnesium ions per monomer.</text>
</comment>
<comment type="pathway">
    <text evidence="1">Amino-acid biosynthesis; L-tryptophan biosynthesis; L-tryptophan from chorismate: step 2/5.</text>
</comment>
<comment type="subunit">
    <text evidence="1">Homodimer.</text>
</comment>
<comment type="similarity">
    <text evidence="1">Belongs to the anthranilate phosphoribosyltransferase family.</text>
</comment>
<dbReference type="EC" id="2.4.2.18" evidence="1"/>
<dbReference type="EMBL" id="CP000377">
    <property type="protein sequence ID" value="ABF63873.1"/>
    <property type="molecule type" value="Genomic_DNA"/>
</dbReference>
<dbReference type="RefSeq" id="WP_011538480.1">
    <property type="nucleotide sequence ID" value="NC_008044.1"/>
</dbReference>
<dbReference type="SMR" id="Q1GHJ3"/>
<dbReference type="STRING" id="292414.TM1040_1140"/>
<dbReference type="KEGG" id="sit:TM1040_1140"/>
<dbReference type="eggNOG" id="COG0547">
    <property type="taxonomic scope" value="Bacteria"/>
</dbReference>
<dbReference type="HOGENOM" id="CLU_034315_2_1_5"/>
<dbReference type="OrthoDB" id="9806430at2"/>
<dbReference type="UniPathway" id="UPA00035">
    <property type="reaction ID" value="UER00041"/>
</dbReference>
<dbReference type="Proteomes" id="UP000000636">
    <property type="component" value="Chromosome"/>
</dbReference>
<dbReference type="GO" id="GO:0005829">
    <property type="term" value="C:cytosol"/>
    <property type="evidence" value="ECO:0007669"/>
    <property type="project" value="TreeGrafter"/>
</dbReference>
<dbReference type="GO" id="GO:0004048">
    <property type="term" value="F:anthranilate phosphoribosyltransferase activity"/>
    <property type="evidence" value="ECO:0007669"/>
    <property type="project" value="UniProtKB-UniRule"/>
</dbReference>
<dbReference type="GO" id="GO:0000287">
    <property type="term" value="F:magnesium ion binding"/>
    <property type="evidence" value="ECO:0007669"/>
    <property type="project" value="UniProtKB-UniRule"/>
</dbReference>
<dbReference type="GO" id="GO:0000162">
    <property type="term" value="P:L-tryptophan biosynthetic process"/>
    <property type="evidence" value="ECO:0007669"/>
    <property type="project" value="UniProtKB-UniRule"/>
</dbReference>
<dbReference type="FunFam" id="3.40.1030.10:FF:000002">
    <property type="entry name" value="Anthranilate phosphoribosyltransferase"/>
    <property type="match status" value="1"/>
</dbReference>
<dbReference type="Gene3D" id="3.40.1030.10">
    <property type="entry name" value="Nucleoside phosphorylase/phosphoribosyltransferase catalytic domain"/>
    <property type="match status" value="1"/>
</dbReference>
<dbReference type="Gene3D" id="1.20.970.10">
    <property type="entry name" value="Transferase, Pyrimidine Nucleoside Phosphorylase, Chain C"/>
    <property type="match status" value="1"/>
</dbReference>
<dbReference type="HAMAP" id="MF_00211">
    <property type="entry name" value="TrpD"/>
    <property type="match status" value="1"/>
</dbReference>
<dbReference type="InterPro" id="IPR005940">
    <property type="entry name" value="Anthranilate_Pribosyl_Tfrase"/>
</dbReference>
<dbReference type="InterPro" id="IPR000312">
    <property type="entry name" value="Glycosyl_Trfase_fam3"/>
</dbReference>
<dbReference type="InterPro" id="IPR017459">
    <property type="entry name" value="Glycosyl_Trfase_fam3_N_dom"/>
</dbReference>
<dbReference type="InterPro" id="IPR036320">
    <property type="entry name" value="Glycosyl_Trfase_fam3_N_dom_sf"/>
</dbReference>
<dbReference type="InterPro" id="IPR035902">
    <property type="entry name" value="Nuc_phospho_transferase"/>
</dbReference>
<dbReference type="NCBIfam" id="TIGR01245">
    <property type="entry name" value="trpD"/>
    <property type="match status" value="1"/>
</dbReference>
<dbReference type="PANTHER" id="PTHR43285">
    <property type="entry name" value="ANTHRANILATE PHOSPHORIBOSYLTRANSFERASE"/>
    <property type="match status" value="1"/>
</dbReference>
<dbReference type="PANTHER" id="PTHR43285:SF2">
    <property type="entry name" value="ANTHRANILATE PHOSPHORIBOSYLTRANSFERASE"/>
    <property type="match status" value="1"/>
</dbReference>
<dbReference type="Pfam" id="PF02885">
    <property type="entry name" value="Glycos_trans_3N"/>
    <property type="match status" value="1"/>
</dbReference>
<dbReference type="Pfam" id="PF00591">
    <property type="entry name" value="Glycos_transf_3"/>
    <property type="match status" value="1"/>
</dbReference>
<dbReference type="SUPFAM" id="SSF52418">
    <property type="entry name" value="Nucleoside phosphorylase/phosphoribosyltransferase catalytic domain"/>
    <property type="match status" value="1"/>
</dbReference>
<dbReference type="SUPFAM" id="SSF47648">
    <property type="entry name" value="Nucleoside phosphorylase/phosphoribosyltransferase N-terminal domain"/>
    <property type="match status" value="1"/>
</dbReference>
<feature type="chain" id="PRO_1000043070" description="Anthranilate phosphoribosyltransferase">
    <location>
        <begin position="1"/>
        <end position="340"/>
    </location>
</feature>
<feature type="binding site" evidence="1">
    <location>
        <position position="81"/>
    </location>
    <ligand>
        <name>5-phospho-alpha-D-ribose 1-diphosphate</name>
        <dbReference type="ChEBI" id="CHEBI:58017"/>
    </ligand>
</feature>
<feature type="binding site" evidence="1">
    <location>
        <position position="81"/>
    </location>
    <ligand>
        <name>anthranilate</name>
        <dbReference type="ChEBI" id="CHEBI:16567"/>
        <label>1</label>
    </ligand>
</feature>
<feature type="binding site" evidence="1">
    <location>
        <begin position="84"/>
        <end position="85"/>
    </location>
    <ligand>
        <name>5-phospho-alpha-D-ribose 1-diphosphate</name>
        <dbReference type="ChEBI" id="CHEBI:58017"/>
    </ligand>
</feature>
<feature type="binding site" evidence="1">
    <location>
        <position position="89"/>
    </location>
    <ligand>
        <name>5-phospho-alpha-D-ribose 1-diphosphate</name>
        <dbReference type="ChEBI" id="CHEBI:58017"/>
    </ligand>
</feature>
<feature type="binding site" evidence="1">
    <location>
        <begin position="91"/>
        <end position="94"/>
    </location>
    <ligand>
        <name>5-phospho-alpha-D-ribose 1-diphosphate</name>
        <dbReference type="ChEBI" id="CHEBI:58017"/>
    </ligand>
</feature>
<feature type="binding site" evidence="1">
    <location>
        <position position="93"/>
    </location>
    <ligand>
        <name>Mg(2+)</name>
        <dbReference type="ChEBI" id="CHEBI:18420"/>
        <label>1</label>
    </ligand>
</feature>
<feature type="binding site" evidence="1">
    <location>
        <begin position="109"/>
        <end position="117"/>
    </location>
    <ligand>
        <name>5-phospho-alpha-D-ribose 1-diphosphate</name>
        <dbReference type="ChEBI" id="CHEBI:58017"/>
    </ligand>
</feature>
<feature type="binding site" evidence="1">
    <location>
        <position position="112"/>
    </location>
    <ligand>
        <name>anthranilate</name>
        <dbReference type="ChEBI" id="CHEBI:16567"/>
        <label>1</label>
    </ligand>
</feature>
<feature type="binding site" evidence="1">
    <location>
        <position position="121"/>
    </location>
    <ligand>
        <name>5-phospho-alpha-D-ribose 1-diphosphate</name>
        <dbReference type="ChEBI" id="CHEBI:58017"/>
    </ligand>
</feature>
<feature type="binding site" evidence="1">
    <location>
        <position position="167"/>
    </location>
    <ligand>
        <name>anthranilate</name>
        <dbReference type="ChEBI" id="CHEBI:16567"/>
        <label>2</label>
    </ligand>
</feature>
<feature type="binding site" evidence="1">
    <location>
        <position position="226"/>
    </location>
    <ligand>
        <name>Mg(2+)</name>
        <dbReference type="ChEBI" id="CHEBI:18420"/>
        <label>2</label>
    </ligand>
</feature>
<feature type="binding site" evidence="1">
    <location>
        <position position="227"/>
    </location>
    <ligand>
        <name>Mg(2+)</name>
        <dbReference type="ChEBI" id="CHEBI:18420"/>
        <label>1</label>
    </ligand>
</feature>
<feature type="binding site" evidence="1">
    <location>
        <position position="227"/>
    </location>
    <ligand>
        <name>Mg(2+)</name>
        <dbReference type="ChEBI" id="CHEBI:18420"/>
        <label>2</label>
    </ligand>
</feature>
<protein>
    <recommendedName>
        <fullName evidence="1">Anthranilate phosphoribosyltransferase</fullName>
        <ecNumber evidence="1">2.4.2.18</ecNumber>
    </recommendedName>
</protein>
<accession>Q1GHJ3</accession>
<reference key="1">
    <citation type="submission" date="2006-05" db="EMBL/GenBank/DDBJ databases">
        <title>Complete sequence of chromosome of Silicibacter sp. TM1040.</title>
        <authorList>
            <consortium name="US DOE Joint Genome Institute"/>
            <person name="Copeland A."/>
            <person name="Lucas S."/>
            <person name="Lapidus A."/>
            <person name="Barry K."/>
            <person name="Detter J.C."/>
            <person name="Glavina del Rio T."/>
            <person name="Hammon N."/>
            <person name="Israni S."/>
            <person name="Dalin E."/>
            <person name="Tice H."/>
            <person name="Pitluck S."/>
            <person name="Brettin T."/>
            <person name="Bruce D."/>
            <person name="Han C."/>
            <person name="Tapia R."/>
            <person name="Goodwin L."/>
            <person name="Thompson L.S."/>
            <person name="Gilna P."/>
            <person name="Schmutz J."/>
            <person name="Larimer F."/>
            <person name="Land M."/>
            <person name="Hauser L."/>
            <person name="Kyrpides N."/>
            <person name="Kim E."/>
            <person name="Belas R."/>
            <person name="Moran M.A."/>
            <person name="Buchan A."/>
            <person name="Gonzalez J.M."/>
            <person name="Schell M.A."/>
            <person name="Sun F."/>
            <person name="Richardson P."/>
        </authorList>
    </citation>
    <scope>NUCLEOTIDE SEQUENCE [LARGE SCALE GENOMIC DNA]</scope>
    <source>
        <strain>TM1040</strain>
    </source>
</reference>
<name>TRPD_RUEST</name>
<proteinExistence type="inferred from homology"/>
<sequence>MSDALKPLIGLAADRALTRTEAETAFAALFNGEATPSQMGGLLMALRTRGETVDEYAAAAAVMRAKCNKVSAPADAMDIVGTGGDGKGTLNISTATAFVVAGAGVPVAKHGNRNLSSKSGAADALTEMGIQVMVGPKVVEKSLKEAGICFMMAPMHHPAIAHVMPTRQELGTRTIFNILGPLTNPADVKRQLTGAFSRDLIRPMAETLKQLGSEVAWLVHGSDGTDELTITGVSWVAGLSEDGNISEFEVHPEEAGLPEHPFEAIVGGTPAENAAAFRALLEGTPSAYRDAVLLNSAAALKVAGVVSSLKEGAERAAESIDSGAALGKVTAVARITSEAS</sequence>